<accession>C3PI36</accession>
<dbReference type="EC" id="5.2.1.8" evidence="1"/>
<dbReference type="EMBL" id="CP001601">
    <property type="protein sequence ID" value="ACP33490.1"/>
    <property type="molecule type" value="Genomic_DNA"/>
</dbReference>
<dbReference type="RefSeq" id="WP_010190926.1">
    <property type="nucleotide sequence ID" value="NC_012590.1"/>
</dbReference>
<dbReference type="SMR" id="C3PI36"/>
<dbReference type="STRING" id="548476.cauri_1897"/>
<dbReference type="GeneID" id="31924531"/>
<dbReference type="KEGG" id="car:cauri_1897"/>
<dbReference type="eggNOG" id="COG0544">
    <property type="taxonomic scope" value="Bacteria"/>
</dbReference>
<dbReference type="HOGENOM" id="CLU_033058_3_0_11"/>
<dbReference type="OrthoDB" id="9767721at2"/>
<dbReference type="Proteomes" id="UP000002077">
    <property type="component" value="Chromosome"/>
</dbReference>
<dbReference type="GO" id="GO:0005737">
    <property type="term" value="C:cytoplasm"/>
    <property type="evidence" value="ECO:0007669"/>
    <property type="project" value="UniProtKB-SubCell"/>
</dbReference>
<dbReference type="GO" id="GO:0003755">
    <property type="term" value="F:peptidyl-prolyl cis-trans isomerase activity"/>
    <property type="evidence" value="ECO:0007669"/>
    <property type="project" value="UniProtKB-UniRule"/>
</dbReference>
<dbReference type="GO" id="GO:0044183">
    <property type="term" value="F:protein folding chaperone"/>
    <property type="evidence" value="ECO:0007669"/>
    <property type="project" value="TreeGrafter"/>
</dbReference>
<dbReference type="GO" id="GO:0043022">
    <property type="term" value="F:ribosome binding"/>
    <property type="evidence" value="ECO:0007669"/>
    <property type="project" value="TreeGrafter"/>
</dbReference>
<dbReference type="GO" id="GO:0051083">
    <property type="term" value="P:'de novo' cotranslational protein folding"/>
    <property type="evidence" value="ECO:0007669"/>
    <property type="project" value="TreeGrafter"/>
</dbReference>
<dbReference type="GO" id="GO:0051301">
    <property type="term" value="P:cell division"/>
    <property type="evidence" value="ECO:0007669"/>
    <property type="project" value="UniProtKB-KW"/>
</dbReference>
<dbReference type="GO" id="GO:0061077">
    <property type="term" value="P:chaperone-mediated protein folding"/>
    <property type="evidence" value="ECO:0007669"/>
    <property type="project" value="TreeGrafter"/>
</dbReference>
<dbReference type="GO" id="GO:0015031">
    <property type="term" value="P:protein transport"/>
    <property type="evidence" value="ECO:0007669"/>
    <property type="project" value="UniProtKB-UniRule"/>
</dbReference>
<dbReference type="GO" id="GO:0043335">
    <property type="term" value="P:protein unfolding"/>
    <property type="evidence" value="ECO:0007669"/>
    <property type="project" value="TreeGrafter"/>
</dbReference>
<dbReference type="Gene3D" id="3.10.50.40">
    <property type="match status" value="1"/>
</dbReference>
<dbReference type="Gene3D" id="3.30.70.1050">
    <property type="entry name" value="Trigger factor ribosome-binding domain"/>
    <property type="match status" value="1"/>
</dbReference>
<dbReference type="Gene3D" id="1.10.3120.10">
    <property type="entry name" value="Trigger factor, C-terminal domain"/>
    <property type="match status" value="1"/>
</dbReference>
<dbReference type="HAMAP" id="MF_00303">
    <property type="entry name" value="Trigger_factor_Tig"/>
    <property type="match status" value="1"/>
</dbReference>
<dbReference type="InterPro" id="IPR046357">
    <property type="entry name" value="PPIase_dom_sf"/>
</dbReference>
<dbReference type="InterPro" id="IPR001179">
    <property type="entry name" value="PPIase_FKBP_dom"/>
</dbReference>
<dbReference type="InterPro" id="IPR005215">
    <property type="entry name" value="Trig_fac"/>
</dbReference>
<dbReference type="InterPro" id="IPR008880">
    <property type="entry name" value="Trigger_fac_C"/>
</dbReference>
<dbReference type="InterPro" id="IPR037041">
    <property type="entry name" value="Trigger_fac_C_sf"/>
</dbReference>
<dbReference type="InterPro" id="IPR008881">
    <property type="entry name" value="Trigger_fac_ribosome-bd_bac"/>
</dbReference>
<dbReference type="InterPro" id="IPR036611">
    <property type="entry name" value="Trigger_fac_ribosome-bd_sf"/>
</dbReference>
<dbReference type="InterPro" id="IPR027304">
    <property type="entry name" value="Trigger_fact/SurA_dom_sf"/>
</dbReference>
<dbReference type="NCBIfam" id="TIGR00115">
    <property type="entry name" value="tig"/>
    <property type="match status" value="1"/>
</dbReference>
<dbReference type="PANTHER" id="PTHR30560">
    <property type="entry name" value="TRIGGER FACTOR CHAPERONE AND PEPTIDYL-PROLYL CIS/TRANS ISOMERASE"/>
    <property type="match status" value="1"/>
</dbReference>
<dbReference type="PANTHER" id="PTHR30560:SF3">
    <property type="entry name" value="TRIGGER FACTOR-LIKE PROTEIN TIG, CHLOROPLASTIC"/>
    <property type="match status" value="1"/>
</dbReference>
<dbReference type="Pfam" id="PF00254">
    <property type="entry name" value="FKBP_C"/>
    <property type="match status" value="1"/>
</dbReference>
<dbReference type="Pfam" id="PF05698">
    <property type="entry name" value="Trigger_C"/>
    <property type="match status" value="1"/>
</dbReference>
<dbReference type="Pfam" id="PF05697">
    <property type="entry name" value="Trigger_N"/>
    <property type="match status" value="1"/>
</dbReference>
<dbReference type="PIRSF" id="PIRSF003095">
    <property type="entry name" value="Trigger_factor"/>
    <property type="match status" value="1"/>
</dbReference>
<dbReference type="SUPFAM" id="SSF54534">
    <property type="entry name" value="FKBP-like"/>
    <property type="match status" value="1"/>
</dbReference>
<dbReference type="SUPFAM" id="SSF109998">
    <property type="entry name" value="Triger factor/SurA peptide-binding domain-like"/>
    <property type="match status" value="1"/>
</dbReference>
<dbReference type="SUPFAM" id="SSF102735">
    <property type="entry name" value="Trigger factor ribosome-binding domain"/>
    <property type="match status" value="1"/>
</dbReference>
<dbReference type="PROSITE" id="PS50059">
    <property type="entry name" value="FKBP_PPIASE"/>
    <property type="match status" value="1"/>
</dbReference>
<keyword id="KW-0131">Cell cycle</keyword>
<keyword id="KW-0132">Cell division</keyword>
<keyword id="KW-0143">Chaperone</keyword>
<keyword id="KW-0963">Cytoplasm</keyword>
<keyword id="KW-0413">Isomerase</keyword>
<keyword id="KW-1185">Reference proteome</keyword>
<keyword id="KW-0697">Rotamase</keyword>
<feature type="chain" id="PRO_1000198153" description="Trigger factor">
    <location>
        <begin position="1"/>
        <end position="451"/>
    </location>
</feature>
<feature type="domain" description="PPIase FKBP-type" evidence="1">
    <location>
        <begin position="162"/>
        <end position="243"/>
    </location>
</feature>
<gene>
    <name evidence="1" type="primary">tig</name>
    <name type="ordered locus">cauri_1897</name>
</gene>
<name>TIG_CORA7</name>
<proteinExistence type="inferred from homology"/>
<protein>
    <recommendedName>
        <fullName evidence="1">Trigger factor</fullName>
        <shortName evidence="1">TF</shortName>
        <ecNumber evidence="1">5.2.1.8</ecNumber>
    </recommendedName>
    <alternativeName>
        <fullName evidence="1">PPIase</fullName>
    </alternativeName>
</protein>
<evidence type="ECO:0000255" key="1">
    <source>
        <dbReference type="HAMAP-Rule" id="MF_00303"/>
    </source>
</evidence>
<comment type="function">
    <text evidence="1">Involved in protein export. Acts as a chaperone by maintaining the newly synthesized protein in an open conformation. Functions as a peptidyl-prolyl cis-trans isomerase.</text>
</comment>
<comment type="catalytic activity">
    <reaction evidence="1">
        <text>[protein]-peptidylproline (omega=180) = [protein]-peptidylproline (omega=0)</text>
        <dbReference type="Rhea" id="RHEA:16237"/>
        <dbReference type="Rhea" id="RHEA-COMP:10747"/>
        <dbReference type="Rhea" id="RHEA-COMP:10748"/>
        <dbReference type="ChEBI" id="CHEBI:83833"/>
        <dbReference type="ChEBI" id="CHEBI:83834"/>
        <dbReference type="EC" id="5.2.1.8"/>
    </reaction>
</comment>
<comment type="subcellular location">
    <subcellularLocation>
        <location>Cytoplasm</location>
    </subcellularLocation>
    <text evidence="1">About half TF is bound to the ribosome near the polypeptide exit tunnel while the other half is free in the cytoplasm.</text>
</comment>
<comment type="domain">
    <text evidence="1">Consists of 3 domains; the N-terminus binds the ribosome, the middle domain has PPIase activity, while the C-terminus has intrinsic chaperone activity on its own.</text>
</comment>
<comment type="similarity">
    <text evidence="1">Belongs to the FKBP-type PPIase family. Tig subfamily.</text>
</comment>
<sequence>MKTTVDKLSDTRVKLTVNVPFAELDKEIDQAYAAIAQQVSIPGFRKGKAPRQLIDARFGRGPILEQVVNDMLPSRYEQAVTENDLKVIGQPEIDIAKLEDNDFVEFTAEVDIRPEFEVPDFSKISVKVPALETSEEDVDKALEDLASRFGELKDTKRKMKTGDYAIIDITTEVDGTKLDEASHEGMTYRIGDDNLIKGLDTALRGMKTDEDNEFTTTIQSGEHEGDEATVKVHVQQSKERKLPDLDDEFAQMASEFDTIDELREDTKTRVEESKKSEQAAAIRDEVLKAALEEVSFELPSSIVDEQVHAQLHQVMGQLAHDEKALAQLLEAQGTTREEFDADARKSAEESVRTQLFLDALAEIEEPEVSQQELTDHILFTAQSYGMDPNQFIQQLQSSNQLGNLFSDVRRGKALATAICRAEVTDEAGNKVDVDQYFGEIDEDEAEASEEK</sequence>
<reference key="1">
    <citation type="journal article" date="2010" name="BMC Genomics">
        <title>Complete genome sequence and lifestyle of black-pigmented Corynebacterium aurimucosum ATCC 700975 (formerly C. nigricans CN-1) isolated from a vaginal swab of a woman with spontaneous abortion.</title>
        <authorList>
            <person name="Trost E."/>
            <person name="Gotker S."/>
            <person name="Schneider J."/>
            <person name="Schneiker-Bekel S."/>
            <person name="Szczepanowski R."/>
            <person name="Tilker A."/>
            <person name="Viehoever P."/>
            <person name="Arnold W."/>
            <person name="Bekel T."/>
            <person name="Blom J."/>
            <person name="Gartemann K.H."/>
            <person name="Linke B."/>
            <person name="Goesmann A."/>
            <person name="Puhler A."/>
            <person name="Shukla S.K."/>
            <person name="Tauch A."/>
        </authorList>
    </citation>
    <scope>NUCLEOTIDE SEQUENCE [LARGE SCALE GENOMIC DNA]</scope>
    <source>
        <strain>ATCC 700975 / DSM 44827 / CIP 107346 / CN-1</strain>
    </source>
</reference>
<organism>
    <name type="scientific">Corynebacterium aurimucosum (strain ATCC 700975 / DSM 44827 / CIP 107346 / CN-1)</name>
    <name type="common">Corynebacterium nigricans</name>
    <dbReference type="NCBI Taxonomy" id="548476"/>
    <lineage>
        <taxon>Bacteria</taxon>
        <taxon>Bacillati</taxon>
        <taxon>Actinomycetota</taxon>
        <taxon>Actinomycetes</taxon>
        <taxon>Mycobacteriales</taxon>
        <taxon>Corynebacteriaceae</taxon>
        <taxon>Corynebacterium</taxon>
    </lineage>
</organism>